<organism>
    <name type="scientific">Staphylococcus aureus</name>
    <dbReference type="NCBI Taxonomy" id="1280"/>
    <lineage>
        <taxon>Bacteria</taxon>
        <taxon>Bacillati</taxon>
        <taxon>Bacillota</taxon>
        <taxon>Bacilli</taxon>
        <taxon>Bacillales</taxon>
        <taxon>Staphylococcaceae</taxon>
        <taxon>Staphylococcus</taxon>
    </lineage>
</organism>
<comment type="function">
    <text evidence="4 5">A methylase that recognizes the double-stranded sequence 5'-GGNCC-3', methylates C-4 on both strands, and protects the DNA from cleavage by the Sau96I endonuclease.</text>
</comment>
<comment type="catalytic activity">
    <reaction evidence="3 4">
        <text>a 2'-deoxycytidine in DNA + S-adenosyl-L-methionine = a 5-methyl-2'-deoxycytidine in DNA + S-adenosyl-L-homocysteine + H(+)</text>
        <dbReference type="Rhea" id="RHEA:13681"/>
        <dbReference type="Rhea" id="RHEA-COMP:11369"/>
        <dbReference type="Rhea" id="RHEA-COMP:11370"/>
        <dbReference type="ChEBI" id="CHEBI:15378"/>
        <dbReference type="ChEBI" id="CHEBI:57856"/>
        <dbReference type="ChEBI" id="CHEBI:59789"/>
        <dbReference type="ChEBI" id="CHEBI:85452"/>
        <dbReference type="ChEBI" id="CHEBI:85454"/>
        <dbReference type="EC" id="2.1.1.37"/>
    </reaction>
</comment>
<comment type="similarity">
    <text evidence="2">Belongs to the class I-like SAM-binding methyltransferase superfamily. C5-methyltransferase family.</text>
</comment>
<sequence>MRLNKGSIIEKMKNQNIKTQTELAEKIDISKSQLSFMFSDEYEPLKKNVIKLADVLKVSPNDIILDEEDQMPINSDFNRYDYKLDEFIDVSNVRKNKDYNVFETFAGAGGLALGLESAGLSTYGAVEIDKNAAETLRINRPKWKVIENDIEFIADNLDEFIDEEIDILSGGYPCQTFSYAGKRNGFADTRGTLFYPYSKILSKLKPKAFIAENVRGLVNHDDGKTLEVMLKVFIKEGYEVYWNILNSWNYDVAQKRERIVIIGIREDLVKEQKYPFRFPLAQVYKPVLKDVLKDVPKSKVTAYSDKKREVMKLVPPGGCWVDLPEQIAKDYMGKSWYSGGGKRGMARRISWDEPCLTLTTSPSQKQTERCHPDETRPFSIREYARIQSFPDEWEFSGGVGAQYRQIGNAVPVNLAKYIGKSLVHYLNQFN</sequence>
<accession>P23737</accession>
<gene>
    <name evidence="6" type="primary">sau96IM</name>
</gene>
<dbReference type="EC" id="2.1.1.37" evidence="4"/>
<dbReference type="EMBL" id="X53096">
    <property type="protein sequence ID" value="CAA37260.1"/>
    <property type="molecule type" value="Genomic_DNA"/>
</dbReference>
<dbReference type="PIR" id="S12705">
    <property type="entry name" value="S12705"/>
</dbReference>
<dbReference type="SMR" id="P23737"/>
<dbReference type="REBASE" id="182835">
    <property type="entry name" value="M.Bli37ORF2575P"/>
</dbReference>
<dbReference type="REBASE" id="182836">
    <property type="entry name" value="M.Bli14ORF1492P"/>
</dbReference>
<dbReference type="REBASE" id="182841">
    <property type="entry name" value="M.Bli34ORF1606P"/>
</dbReference>
<dbReference type="REBASE" id="195420">
    <property type="entry name" value="M.BliB11ORF1170P"/>
</dbReference>
<dbReference type="REBASE" id="204712">
    <property type="entry name" value="M.Bso1395ORF4807P"/>
</dbReference>
<dbReference type="REBASE" id="3496">
    <property type="entry name" value="M.Sau96I"/>
</dbReference>
<dbReference type="PATRIC" id="fig|1280.3540.peg.2442"/>
<dbReference type="PRO" id="PR:P23737"/>
<dbReference type="GO" id="GO:0003886">
    <property type="term" value="F:DNA (cytosine-5-)-methyltransferase activity"/>
    <property type="evidence" value="ECO:0007669"/>
    <property type="project" value="UniProtKB-EC"/>
</dbReference>
<dbReference type="GO" id="GO:0003677">
    <property type="term" value="F:DNA binding"/>
    <property type="evidence" value="ECO:0007669"/>
    <property type="project" value="UniProtKB-KW"/>
</dbReference>
<dbReference type="GO" id="GO:0009307">
    <property type="term" value="P:DNA restriction-modification system"/>
    <property type="evidence" value="ECO:0007669"/>
    <property type="project" value="UniProtKB-KW"/>
</dbReference>
<dbReference type="GO" id="GO:0032259">
    <property type="term" value="P:methylation"/>
    <property type="evidence" value="ECO:0007669"/>
    <property type="project" value="UniProtKB-KW"/>
</dbReference>
<dbReference type="GO" id="GO:0044027">
    <property type="term" value="P:negative regulation of gene expression via chromosomal CpG island methylation"/>
    <property type="evidence" value="ECO:0007669"/>
    <property type="project" value="TreeGrafter"/>
</dbReference>
<dbReference type="CDD" id="cd00315">
    <property type="entry name" value="Cyt_C5_DNA_methylase"/>
    <property type="match status" value="1"/>
</dbReference>
<dbReference type="CDD" id="cd00093">
    <property type="entry name" value="HTH_XRE"/>
    <property type="match status" value="1"/>
</dbReference>
<dbReference type="Gene3D" id="3.90.120.10">
    <property type="entry name" value="DNA Methylase, subunit A, domain 2"/>
    <property type="match status" value="1"/>
</dbReference>
<dbReference type="Gene3D" id="1.10.260.40">
    <property type="entry name" value="lambda repressor-like DNA-binding domains"/>
    <property type="match status" value="1"/>
</dbReference>
<dbReference type="Gene3D" id="3.40.50.150">
    <property type="entry name" value="Vaccinia Virus protein VP39"/>
    <property type="match status" value="1"/>
</dbReference>
<dbReference type="InterPro" id="IPR050390">
    <property type="entry name" value="C5-Methyltransferase"/>
</dbReference>
<dbReference type="InterPro" id="IPR018117">
    <property type="entry name" value="C5_DNA_meth_AS"/>
</dbReference>
<dbReference type="InterPro" id="IPR001525">
    <property type="entry name" value="C5_MeTfrase"/>
</dbReference>
<dbReference type="InterPro" id="IPR031303">
    <property type="entry name" value="C5_meth_CS"/>
</dbReference>
<dbReference type="InterPro" id="IPR001387">
    <property type="entry name" value="Cro/C1-type_HTH"/>
</dbReference>
<dbReference type="InterPro" id="IPR010982">
    <property type="entry name" value="Lambda_DNA-bd_dom_sf"/>
</dbReference>
<dbReference type="InterPro" id="IPR029063">
    <property type="entry name" value="SAM-dependent_MTases_sf"/>
</dbReference>
<dbReference type="NCBIfam" id="TIGR00675">
    <property type="entry name" value="dcm"/>
    <property type="match status" value="1"/>
</dbReference>
<dbReference type="PANTHER" id="PTHR10629">
    <property type="entry name" value="CYTOSINE-SPECIFIC METHYLTRANSFERASE"/>
    <property type="match status" value="1"/>
</dbReference>
<dbReference type="PANTHER" id="PTHR10629:SF52">
    <property type="entry name" value="DNA (CYTOSINE-5)-METHYLTRANSFERASE 1"/>
    <property type="match status" value="1"/>
</dbReference>
<dbReference type="Pfam" id="PF00145">
    <property type="entry name" value="DNA_methylase"/>
    <property type="match status" value="1"/>
</dbReference>
<dbReference type="Pfam" id="PF01381">
    <property type="entry name" value="HTH_3"/>
    <property type="match status" value="1"/>
</dbReference>
<dbReference type="PRINTS" id="PR00105">
    <property type="entry name" value="C5METTRFRASE"/>
</dbReference>
<dbReference type="SMART" id="SM00530">
    <property type="entry name" value="HTH_XRE"/>
    <property type="match status" value="1"/>
</dbReference>
<dbReference type="SUPFAM" id="SSF47413">
    <property type="entry name" value="lambda repressor-like DNA-binding domains"/>
    <property type="match status" value="1"/>
</dbReference>
<dbReference type="SUPFAM" id="SSF53335">
    <property type="entry name" value="S-adenosyl-L-methionine-dependent methyltransferases"/>
    <property type="match status" value="1"/>
</dbReference>
<dbReference type="PROSITE" id="PS00094">
    <property type="entry name" value="C5_MTASE_1"/>
    <property type="match status" value="1"/>
</dbReference>
<dbReference type="PROSITE" id="PS00095">
    <property type="entry name" value="C5_MTASE_2"/>
    <property type="match status" value="1"/>
</dbReference>
<dbReference type="PROSITE" id="PS50943">
    <property type="entry name" value="HTH_CROC1"/>
    <property type="match status" value="1"/>
</dbReference>
<dbReference type="PROSITE" id="PS51679">
    <property type="entry name" value="SAM_MT_C5"/>
    <property type="match status" value="1"/>
</dbReference>
<evidence type="ECO:0000255" key="1">
    <source>
        <dbReference type="PROSITE-ProRule" id="PRU00257"/>
    </source>
</evidence>
<evidence type="ECO:0000255" key="2">
    <source>
        <dbReference type="PROSITE-ProRule" id="PRU01016"/>
    </source>
</evidence>
<evidence type="ECO:0000255" key="3">
    <source>
        <dbReference type="PROSITE-ProRule" id="PRU10018"/>
    </source>
</evidence>
<evidence type="ECO:0000269" key="4">
    <source>
    </source>
</evidence>
<evidence type="ECO:0000303" key="5">
    <source>
    </source>
</evidence>
<evidence type="ECO:0000303" key="6">
    <source>
    </source>
</evidence>
<name>MTS9_STAAU</name>
<reference key="1">
    <citation type="journal article" date="1990" name="Nucleic Acids Res.">
        <title>Cloning and nucleotide sequence of the genes coding for the Sau96I restriction and modification enzymes.</title>
        <authorList>
            <person name="Szilak L."/>
            <person name="Venetianer P."/>
            <person name="Kiss A."/>
        </authorList>
    </citation>
    <scope>NUCLEOTIDE SEQUENCE [GENOMIC DNA]</scope>
    <scope>FUNCTION</scope>
    <scope>CATALYTIC ACTIVITY</scope>
    <source>
        <strain>PS96</strain>
    </source>
</reference>
<reference key="2">
    <citation type="journal article" date="2003" name="Nucleic Acids Res.">
        <title>A nomenclature for restriction enzymes, DNA methyltransferases, homing endonucleases and their genes.</title>
        <authorList>
            <person name="Roberts R.J."/>
            <person name="Belfort M."/>
            <person name="Bestor T."/>
            <person name="Bhagwat A.S."/>
            <person name="Bickle T.A."/>
            <person name="Bitinaite J."/>
            <person name="Blumenthal R.M."/>
            <person name="Degtyarev S.K."/>
            <person name="Dryden D.T."/>
            <person name="Dybvig K."/>
            <person name="Firman K."/>
            <person name="Gromova E.S."/>
            <person name="Gumport R.I."/>
            <person name="Halford S.E."/>
            <person name="Hattman S."/>
            <person name="Heitman J."/>
            <person name="Hornby D.P."/>
            <person name="Janulaitis A."/>
            <person name="Jeltsch A."/>
            <person name="Josephsen J."/>
            <person name="Kiss A."/>
            <person name="Klaenhammer T.R."/>
            <person name="Kobayashi I."/>
            <person name="Kong H."/>
            <person name="Krueger D.H."/>
            <person name="Lacks S."/>
            <person name="Marinus M.G."/>
            <person name="Miyahara M."/>
            <person name="Morgan R.D."/>
            <person name="Murray N.E."/>
            <person name="Nagaraja V."/>
            <person name="Piekarowicz A."/>
            <person name="Pingoud A."/>
            <person name="Raleigh E."/>
            <person name="Rao D.N."/>
            <person name="Reich N."/>
            <person name="Repin V.E."/>
            <person name="Selker E.U."/>
            <person name="Shaw P.C."/>
            <person name="Stein D.C."/>
            <person name="Stoddard B.L."/>
            <person name="Szybalski W."/>
            <person name="Trautner T.A."/>
            <person name="Van Etten J.L."/>
            <person name="Vitor J.M."/>
            <person name="Wilson G.G."/>
            <person name="Xu S.Y."/>
        </authorList>
    </citation>
    <scope>NOMENCLATURE</scope>
</reference>
<feature type="chain" id="PRO_0000087908" description="Type II methyltransferase M.Sau96I">
    <location>
        <begin position="1"/>
        <end position="430"/>
    </location>
</feature>
<feature type="domain" description="HTH cro/C1-type" evidence="1">
    <location>
        <begin position="9"/>
        <end position="63"/>
    </location>
</feature>
<feature type="domain" description="SAM-dependent MTase C5-type" evidence="2">
    <location>
        <begin position="99"/>
        <end position="429"/>
    </location>
</feature>
<feature type="active site" evidence="2 3">
    <location>
        <position position="174"/>
    </location>
</feature>
<keyword id="KW-0238">DNA-binding</keyword>
<keyword id="KW-0489">Methyltransferase</keyword>
<keyword id="KW-0680">Restriction system</keyword>
<keyword id="KW-0949">S-adenosyl-L-methionine</keyword>
<keyword id="KW-0804">Transcription</keyword>
<keyword id="KW-0805">Transcription regulation</keyword>
<keyword id="KW-0808">Transferase</keyword>
<proteinExistence type="evidence at protein level"/>
<protein>
    <recommendedName>
        <fullName evidence="5">Type II methyltransferase M.Sau96I</fullName>
        <shortName evidence="6">M.Sau96I</shortName>
        <ecNumber evidence="4">2.1.1.37</ecNumber>
    </recommendedName>
    <alternativeName>
        <fullName>Cytosine-specific methyltransferase Sau96I</fullName>
    </alternativeName>
    <alternativeName>
        <fullName>Modification methylase Sau96I</fullName>
    </alternativeName>
</protein>